<dbReference type="EMBL" id="CP001043">
    <property type="protein sequence ID" value="ACC72001.1"/>
    <property type="molecule type" value="Genomic_DNA"/>
</dbReference>
<dbReference type="RefSeq" id="WP_012402188.1">
    <property type="nucleotide sequence ID" value="NZ_CADFGH010000028.1"/>
</dbReference>
<dbReference type="SMR" id="B2JI55"/>
<dbReference type="STRING" id="391038.Bphy_2829"/>
<dbReference type="GeneID" id="69968030"/>
<dbReference type="KEGG" id="bph:Bphy_2829"/>
<dbReference type="eggNOG" id="COG0093">
    <property type="taxonomic scope" value="Bacteria"/>
</dbReference>
<dbReference type="HOGENOM" id="CLU_095071_2_1_4"/>
<dbReference type="OrthoDB" id="9806379at2"/>
<dbReference type="Proteomes" id="UP000001192">
    <property type="component" value="Chromosome 1"/>
</dbReference>
<dbReference type="GO" id="GO:0022625">
    <property type="term" value="C:cytosolic large ribosomal subunit"/>
    <property type="evidence" value="ECO:0007669"/>
    <property type="project" value="TreeGrafter"/>
</dbReference>
<dbReference type="GO" id="GO:0070180">
    <property type="term" value="F:large ribosomal subunit rRNA binding"/>
    <property type="evidence" value="ECO:0007669"/>
    <property type="project" value="TreeGrafter"/>
</dbReference>
<dbReference type="GO" id="GO:0003735">
    <property type="term" value="F:structural constituent of ribosome"/>
    <property type="evidence" value="ECO:0007669"/>
    <property type="project" value="InterPro"/>
</dbReference>
<dbReference type="GO" id="GO:0006412">
    <property type="term" value="P:translation"/>
    <property type="evidence" value="ECO:0007669"/>
    <property type="project" value="UniProtKB-UniRule"/>
</dbReference>
<dbReference type="CDD" id="cd00337">
    <property type="entry name" value="Ribosomal_uL14"/>
    <property type="match status" value="1"/>
</dbReference>
<dbReference type="FunFam" id="2.40.150.20:FF:000001">
    <property type="entry name" value="50S ribosomal protein L14"/>
    <property type="match status" value="1"/>
</dbReference>
<dbReference type="Gene3D" id="2.40.150.20">
    <property type="entry name" value="Ribosomal protein L14"/>
    <property type="match status" value="1"/>
</dbReference>
<dbReference type="HAMAP" id="MF_01367">
    <property type="entry name" value="Ribosomal_uL14"/>
    <property type="match status" value="1"/>
</dbReference>
<dbReference type="InterPro" id="IPR000218">
    <property type="entry name" value="Ribosomal_uL14"/>
</dbReference>
<dbReference type="InterPro" id="IPR005745">
    <property type="entry name" value="Ribosomal_uL14_bac-type"/>
</dbReference>
<dbReference type="InterPro" id="IPR019972">
    <property type="entry name" value="Ribosomal_uL14_CS"/>
</dbReference>
<dbReference type="InterPro" id="IPR036853">
    <property type="entry name" value="Ribosomal_uL14_sf"/>
</dbReference>
<dbReference type="NCBIfam" id="TIGR01067">
    <property type="entry name" value="rplN_bact"/>
    <property type="match status" value="1"/>
</dbReference>
<dbReference type="PANTHER" id="PTHR11761">
    <property type="entry name" value="50S/60S RIBOSOMAL PROTEIN L14/L23"/>
    <property type="match status" value="1"/>
</dbReference>
<dbReference type="PANTHER" id="PTHR11761:SF3">
    <property type="entry name" value="LARGE RIBOSOMAL SUBUNIT PROTEIN UL14M"/>
    <property type="match status" value="1"/>
</dbReference>
<dbReference type="Pfam" id="PF00238">
    <property type="entry name" value="Ribosomal_L14"/>
    <property type="match status" value="1"/>
</dbReference>
<dbReference type="SMART" id="SM01374">
    <property type="entry name" value="Ribosomal_L14"/>
    <property type="match status" value="1"/>
</dbReference>
<dbReference type="SUPFAM" id="SSF50193">
    <property type="entry name" value="Ribosomal protein L14"/>
    <property type="match status" value="1"/>
</dbReference>
<dbReference type="PROSITE" id="PS00049">
    <property type="entry name" value="RIBOSOMAL_L14"/>
    <property type="match status" value="1"/>
</dbReference>
<reference key="1">
    <citation type="journal article" date="2014" name="Stand. Genomic Sci.">
        <title>Complete genome sequence of Burkholderia phymatum STM815(T), a broad host range and efficient nitrogen-fixing symbiont of Mimosa species.</title>
        <authorList>
            <person name="Moulin L."/>
            <person name="Klonowska A."/>
            <person name="Caroline B."/>
            <person name="Booth K."/>
            <person name="Vriezen J.A."/>
            <person name="Melkonian R."/>
            <person name="James E.K."/>
            <person name="Young J.P."/>
            <person name="Bena G."/>
            <person name="Hauser L."/>
            <person name="Land M."/>
            <person name="Kyrpides N."/>
            <person name="Bruce D."/>
            <person name="Chain P."/>
            <person name="Copeland A."/>
            <person name="Pitluck S."/>
            <person name="Woyke T."/>
            <person name="Lizotte-Waniewski M."/>
            <person name="Bristow J."/>
            <person name="Riley M."/>
        </authorList>
    </citation>
    <scope>NUCLEOTIDE SEQUENCE [LARGE SCALE GENOMIC DNA]</scope>
    <source>
        <strain>DSM 17167 / CIP 108236 / LMG 21445 / STM815</strain>
    </source>
</reference>
<name>RL14_PARP8</name>
<comment type="function">
    <text evidence="1">Binds to 23S rRNA. Forms part of two intersubunit bridges in the 70S ribosome.</text>
</comment>
<comment type="subunit">
    <text evidence="1">Part of the 50S ribosomal subunit. Forms a cluster with proteins L3 and L19. In the 70S ribosome, L14 and L19 interact and together make contacts with the 16S rRNA in bridges B5 and B8.</text>
</comment>
<comment type="similarity">
    <text evidence="1">Belongs to the universal ribosomal protein uL14 family.</text>
</comment>
<accession>B2JI55</accession>
<feature type="chain" id="PRO_1000144235" description="Large ribosomal subunit protein uL14">
    <location>
        <begin position="1"/>
        <end position="122"/>
    </location>
</feature>
<proteinExistence type="inferred from homology"/>
<gene>
    <name evidence="1" type="primary">rplN</name>
    <name type="ordered locus">Bphy_2829</name>
</gene>
<protein>
    <recommendedName>
        <fullName evidence="1">Large ribosomal subunit protein uL14</fullName>
    </recommendedName>
    <alternativeName>
        <fullName evidence="2">50S ribosomal protein L14</fullName>
    </alternativeName>
</protein>
<organism>
    <name type="scientific">Paraburkholderia phymatum (strain DSM 17167 / CIP 108236 / LMG 21445 / STM815)</name>
    <name type="common">Burkholderia phymatum</name>
    <dbReference type="NCBI Taxonomy" id="391038"/>
    <lineage>
        <taxon>Bacteria</taxon>
        <taxon>Pseudomonadati</taxon>
        <taxon>Pseudomonadota</taxon>
        <taxon>Betaproteobacteria</taxon>
        <taxon>Burkholderiales</taxon>
        <taxon>Burkholderiaceae</taxon>
        <taxon>Paraburkholderia</taxon>
    </lineage>
</organism>
<sequence length="122" mass="13482">MIQTETRLEVADNTGAREVMCIKVLGGSKRRYANIGDIIKVSVKEATPRGRVKKGEIYNAVVVRTAKGVRRQDGSLIKFDGNAAVLLNTKLEPIGTRIFGPVTRELRSERFMKIVSLAPEVL</sequence>
<evidence type="ECO:0000255" key="1">
    <source>
        <dbReference type="HAMAP-Rule" id="MF_01367"/>
    </source>
</evidence>
<evidence type="ECO:0000305" key="2"/>
<keyword id="KW-1185">Reference proteome</keyword>
<keyword id="KW-0687">Ribonucleoprotein</keyword>
<keyword id="KW-0689">Ribosomal protein</keyword>
<keyword id="KW-0694">RNA-binding</keyword>
<keyword id="KW-0699">rRNA-binding</keyword>